<organism>
    <name type="scientific">Stenotrophomonas maltophilia (strain R551-3)</name>
    <dbReference type="NCBI Taxonomy" id="391008"/>
    <lineage>
        <taxon>Bacteria</taxon>
        <taxon>Pseudomonadati</taxon>
        <taxon>Pseudomonadota</taxon>
        <taxon>Gammaproteobacteria</taxon>
        <taxon>Lysobacterales</taxon>
        <taxon>Lysobacteraceae</taxon>
        <taxon>Stenotrophomonas</taxon>
        <taxon>Stenotrophomonas maltophilia group</taxon>
    </lineage>
</organism>
<evidence type="ECO:0000255" key="1">
    <source>
        <dbReference type="HAMAP-Rule" id="MF_00083"/>
    </source>
</evidence>
<sequence>MAGLRLIVGLGNPGSEHARTRHNAGFHFVEALAEKAGARWNVDSKLFGETAKVEIAGQTVWLLKPATFMNLSGKSVTAAQRFWKIEPEETLLAHDELDLAPGVARLKFDGGHGGQNGLRDTIRLLGHGKFHRLRVGIGHPGHKDRVVGWVLGRPSKDDEVLISRAIDDAIDVLPLAVQGDFSEAMKRLHTPK</sequence>
<name>PTH_STRM5</name>
<feature type="chain" id="PRO_1000092989" description="Peptidyl-tRNA hydrolase">
    <location>
        <begin position="1"/>
        <end position="192"/>
    </location>
</feature>
<feature type="active site" description="Proton acceptor" evidence="1">
    <location>
        <position position="22"/>
    </location>
</feature>
<feature type="binding site" evidence="1">
    <location>
        <position position="17"/>
    </location>
    <ligand>
        <name>tRNA</name>
        <dbReference type="ChEBI" id="CHEBI:17843"/>
    </ligand>
</feature>
<feature type="binding site" evidence="1">
    <location>
        <position position="68"/>
    </location>
    <ligand>
        <name>tRNA</name>
        <dbReference type="ChEBI" id="CHEBI:17843"/>
    </ligand>
</feature>
<feature type="binding site" evidence="1">
    <location>
        <position position="70"/>
    </location>
    <ligand>
        <name>tRNA</name>
        <dbReference type="ChEBI" id="CHEBI:17843"/>
    </ligand>
</feature>
<feature type="binding site" evidence="1">
    <location>
        <position position="116"/>
    </location>
    <ligand>
        <name>tRNA</name>
        <dbReference type="ChEBI" id="CHEBI:17843"/>
    </ligand>
</feature>
<feature type="site" description="Discriminates between blocked and unblocked aminoacyl-tRNA" evidence="1">
    <location>
        <position position="12"/>
    </location>
</feature>
<feature type="site" description="Stabilizes the basic form of H active site to accept a proton" evidence="1">
    <location>
        <position position="95"/>
    </location>
</feature>
<comment type="function">
    <text evidence="1">Hydrolyzes ribosome-free peptidyl-tRNAs (with 1 or more amino acids incorporated), which drop off the ribosome during protein synthesis, or as a result of ribosome stalling.</text>
</comment>
<comment type="function">
    <text evidence="1">Catalyzes the release of premature peptidyl moieties from peptidyl-tRNA molecules trapped in stalled 50S ribosomal subunits, and thus maintains levels of free tRNAs and 50S ribosomes.</text>
</comment>
<comment type="catalytic activity">
    <reaction evidence="1">
        <text>an N-acyl-L-alpha-aminoacyl-tRNA + H2O = an N-acyl-L-amino acid + a tRNA + H(+)</text>
        <dbReference type="Rhea" id="RHEA:54448"/>
        <dbReference type="Rhea" id="RHEA-COMP:10123"/>
        <dbReference type="Rhea" id="RHEA-COMP:13883"/>
        <dbReference type="ChEBI" id="CHEBI:15377"/>
        <dbReference type="ChEBI" id="CHEBI:15378"/>
        <dbReference type="ChEBI" id="CHEBI:59874"/>
        <dbReference type="ChEBI" id="CHEBI:78442"/>
        <dbReference type="ChEBI" id="CHEBI:138191"/>
        <dbReference type="EC" id="3.1.1.29"/>
    </reaction>
</comment>
<comment type="subunit">
    <text evidence="1">Monomer.</text>
</comment>
<comment type="subcellular location">
    <subcellularLocation>
        <location evidence="1">Cytoplasm</location>
    </subcellularLocation>
</comment>
<comment type="similarity">
    <text evidence="1">Belongs to the PTH family.</text>
</comment>
<accession>B4SKT5</accession>
<proteinExistence type="inferred from homology"/>
<gene>
    <name evidence="1" type="primary">pth</name>
    <name type="ordered locus">Smal_0728</name>
</gene>
<reference key="1">
    <citation type="submission" date="2008-06" db="EMBL/GenBank/DDBJ databases">
        <title>Complete sequence of Stenotrophomonas maltophilia R551-3.</title>
        <authorList>
            <consortium name="US DOE Joint Genome Institute"/>
            <person name="Lucas S."/>
            <person name="Copeland A."/>
            <person name="Lapidus A."/>
            <person name="Glavina del Rio T."/>
            <person name="Dalin E."/>
            <person name="Tice H."/>
            <person name="Pitluck S."/>
            <person name="Chain P."/>
            <person name="Malfatti S."/>
            <person name="Shin M."/>
            <person name="Vergez L."/>
            <person name="Lang D."/>
            <person name="Schmutz J."/>
            <person name="Larimer F."/>
            <person name="Land M."/>
            <person name="Hauser L."/>
            <person name="Kyrpides N."/>
            <person name="Mikhailova N."/>
            <person name="Taghavi S."/>
            <person name="Monchy S."/>
            <person name="Newman L."/>
            <person name="Vangronsveld J."/>
            <person name="van der Lelie D."/>
            <person name="Richardson P."/>
        </authorList>
    </citation>
    <scope>NUCLEOTIDE SEQUENCE [LARGE SCALE GENOMIC DNA]</scope>
    <source>
        <strain>R551-3</strain>
    </source>
</reference>
<protein>
    <recommendedName>
        <fullName evidence="1">Peptidyl-tRNA hydrolase</fullName>
        <shortName evidence="1">Pth</shortName>
        <ecNumber evidence="1">3.1.1.29</ecNumber>
    </recommendedName>
</protein>
<keyword id="KW-0963">Cytoplasm</keyword>
<keyword id="KW-0378">Hydrolase</keyword>
<keyword id="KW-0694">RNA-binding</keyword>
<keyword id="KW-0820">tRNA-binding</keyword>
<dbReference type="EC" id="3.1.1.29" evidence="1"/>
<dbReference type="EMBL" id="CP001111">
    <property type="protein sequence ID" value="ACF50433.1"/>
    <property type="molecule type" value="Genomic_DNA"/>
</dbReference>
<dbReference type="RefSeq" id="WP_004144977.1">
    <property type="nucleotide sequence ID" value="NC_011071.1"/>
</dbReference>
<dbReference type="SMR" id="B4SKT5"/>
<dbReference type="STRING" id="391008.Smal_0728"/>
<dbReference type="KEGG" id="smt:Smal_0728"/>
<dbReference type="eggNOG" id="COG0193">
    <property type="taxonomic scope" value="Bacteria"/>
</dbReference>
<dbReference type="HOGENOM" id="CLU_062456_3_1_6"/>
<dbReference type="OrthoDB" id="9800507at2"/>
<dbReference type="Proteomes" id="UP000001867">
    <property type="component" value="Chromosome"/>
</dbReference>
<dbReference type="GO" id="GO:0005737">
    <property type="term" value="C:cytoplasm"/>
    <property type="evidence" value="ECO:0007669"/>
    <property type="project" value="UniProtKB-SubCell"/>
</dbReference>
<dbReference type="GO" id="GO:0004045">
    <property type="term" value="F:peptidyl-tRNA hydrolase activity"/>
    <property type="evidence" value="ECO:0007669"/>
    <property type="project" value="UniProtKB-UniRule"/>
</dbReference>
<dbReference type="GO" id="GO:0000049">
    <property type="term" value="F:tRNA binding"/>
    <property type="evidence" value="ECO:0007669"/>
    <property type="project" value="UniProtKB-UniRule"/>
</dbReference>
<dbReference type="GO" id="GO:0006515">
    <property type="term" value="P:protein quality control for misfolded or incompletely synthesized proteins"/>
    <property type="evidence" value="ECO:0007669"/>
    <property type="project" value="UniProtKB-UniRule"/>
</dbReference>
<dbReference type="GO" id="GO:0072344">
    <property type="term" value="P:rescue of stalled ribosome"/>
    <property type="evidence" value="ECO:0007669"/>
    <property type="project" value="UniProtKB-UniRule"/>
</dbReference>
<dbReference type="CDD" id="cd00462">
    <property type="entry name" value="PTH"/>
    <property type="match status" value="1"/>
</dbReference>
<dbReference type="FunFam" id="3.40.50.1470:FF:000001">
    <property type="entry name" value="Peptidyl-tRNA hydrolase"/>
    <property type="match status" value="1"/>
</dbReference>
<dbReference type="Gene3D" id="3.40.50.1470">
    <property type="entry name" value="Peptidyl-tRNA hydrolase"/>
    <property type="match status" value="1"/>
</dbReference>
<dbReference type="HAMAP" id="MF_00083">
    <property type="entry name" value="Pept_tRNA_hydro_bact"/>
    <property type="match status" value="1"/>
</dbReference>
<dbReference type="InterPro" id="IPR001328">
    <property type="entry name" value="Pept_tRNA_hydro"/>
</dbReference>
<dbReference type="InterPro" id="IPR018171">
    <property type="entry name" value="Pept_tRNA_hydro_CS"/>
</dbReference>
<dbReference type="InterPro" id="IPR036416">
    <property type="entry name" value="Pept_tRNA_hydro_sf"/>
</dbReference>
<dbReference type="NCBIfam" id="TIGR00447">
    <property type="entry name" value="pth"/>
    <property type="match status" value="1"/>
</dbReference>
<dbReference type="PANTHER" id="PTHR17224">
    <property type="entry name" value="PEPTIDYL-TRNA HYDROLASE"/>
    <property type="match status" value="1"/>
</dbReference>
<dbReference type="PANTHER" id="PTHR17224:SF1">
    <property type="entry name" value="PEPTIDYL-TRNA HYDROLASE"/>
    <property type="match status" value="1"/>
</dbReference>
<dbReference type="Pfam" id="PF01195">
    <property type="entry name" value="Pept_tRNA_hydro"/>
    <property type="match status" value="1"/>
</dbReference>
<dbReference type="SUPFAM" id="SSF53178">
    <property type="entry name" value="Peptidyl-tRNA hydrolase-like"/>
    <property type="match status" value="1"/>
</dbReference>
<dbReference type="PROSITE" id="PS01195">
    <property type="entry name" value="PEPT_TRNA_HYDROL_1"/>
    <property type="match status" value="1"/>
</dbReference>